<gene>
    <name type="ordered locus">MJ1196</name>
</gene>
<reference key="1">
    <citation type="journal article" date="1996" name="Science">
        <title>Complete genome sequence of the methanogenic archaeon, Methanococcus jannaschii.</title>
        <authorList>
            <person name="Bult C.J."/>
            <person name="White O."/>
            <person name="Olsen G.J."/>
            <person name="Zhou L."/>
            <person name="Fleischmann R.D."/>
            <person name="Sutton G.G."/>
            <person name="Blake J.A."/>
            <person name="FitzGerald L.M."/>
            <person name="Clayton R.A."/>
            <person name="Gocayne J.D."/>
            <person name="Kerlavage A.R."/>
            <person name="Dougherty B.A."/>
            <person name="Tomb J.-F."/>
            <person name="Adams M.D."/>
            <person name="Reich C.I."/>
            <person name="Overbeek R."/>
            <person name="Kirkness E.F."/>
            <person name="Weinstock K.G."/>
            <person name="Merrick J.M."/>
            <person name="Glodek A."/>
            <person name="Scott J.L."/>
            <person name="Geoghagen N.S.M."/>
            <person name="Weidman J.F."/>
            <person name="Fuhrmann J.L."/>
            <person name="Nguyen D."/>
            <person name="Utterback T.R."/>
            <person name="Kelley J.M."/>
            <person name="Peterson J.D."/>
            <person name="Sadow P.W."/>
            <person name="Hanna M.C."/>
            <person name="Cotton M.D."/>
            <person name="Roberts K.M."/>
            <person name="Hurst M.A."/>
            <person name="Kaine B.P."/>
            <person name="Borodovsky M."/>
            <person name="Klenk H.-P."/>
            <person name="Fraser C.M."/>
            <person name="Smith H.O."/>
            <person name="Woese C.R."/>
            <person name="Venter J.C."/>
        </authorList>
    </citation>
    <scope>NUCLEOTIDE SEQUENCE [LARGE SCALE GENOMIC DNA]</scope>
    <source>
        <strain>ATCC 43067 / DSM 2661 / JAL-1 / JCM 10045 / NBRC 100440</strain>
    </source>
</reference>
<keyword id="KW-0029">Amino-acid transport</keyword>
<keyword id="KW-1003">Cell membrane</keyword>
<keyword id="KW-0472">Membrane</keyword>
<keyword id="KW-1185">Reference proteome</keyword>
<keyword id="KW-0812">Transmembrane</keyword>
<keyword id="KW-1133">Transmembrane helix</keyword>
<keyword id="KW-0813">Transport</keyword>
<dbReference type="EMBL" id="L77117">
    <property type="protein sequence ID" value="AAB99200.1"/>
    <property type="molecule type" value="Genomic_DNA"/>
</dbReference>
<dbReference type="PIR" id="C64449">
    <property type="entry name" value="C64449"/>
</dbReference>
<dbReference type="RefSeq" id="WP_010870708.1">
    <property type="nucleotide sequence ID" value="NC_000909.1"/>
</dbReference>
<dbReference type="SMR" id="Q58596"/>
<dbReference type="STRING" id="243232.MJ_1196"/>
<dbReference type="PaxDb" id="243232-MJ_1196"/>
<dbReference type="EnsemblBacteria" id="AAB99200">
    <property type="protein sequence ID" value="AAB99200"/>
    <property type="gene ID" value="MJ_1196"/>
</dbReference>
<dbReference type="GeneID" id="1452091"/>
<dbReference type="KEGG" id="mja:MJ_1196"/>
<dbReference type="eggNOG" id="arCOG00009">
    <property type="taxonomic scope" value="Archaea"/>
</dbReference>
<dbReference type="HOGENOM" id="CLU_743174_0_0_2"/>
<dbReference type="InParanoid" id="Q58596"/>
<dbReference type="OrthoDB" id="65658at2157"/>
<dbReference type="PhylomeDB" id="Q58596"/>
<dbReference type="Proteomes" id="UP000000805">
    <property type="component" value="Chromosome"/>
</dbReference>
<dbReference type="GO" id="GO:0005886">
    <property type="term" value="C:plasma membrane"/>
    <property type="evidence" value="ECO:0007669"/>
    <property type="project" value="UniProtKB-SubCell"/>
</dbReference>
<dbReference type="GO" id="GO:0005283">
    <property type="term" value="F:amino acid:sodium symporter activity"/>
    <property type="evidence" value="ECO:0007669"/>
    <property type="project" value="InterPro"/>
</dbReference>
<dbReference type="Gene3D" id="1.20.1740.10">
    <property type="entry name" value="Amino acid/polyamine transporter I"/>
    <property type="match status" value="1"/>
</dbReference>
<dbReference type="InterPro" id="IPR002293">
    <property type="entry name" value="AA/rel_permease1"/>
</dbReference>
<dbReference type="InterPro" id="IPR050367">
    <property type="entry name" value="APC_superfamily"/>
</dbReference>
<dbReference type="InterPro" id="IPR001463">
    <property type="entry name" value="Na/Ala_symport"/>
</dbReference>
<dbReference type="PANTHER" id="PTHR42770">
    <property type="entry name" value="AMINO ACID TRANSPORTER-RELATED"/>
    <property type="match status" value="1"/>
</dbReference>
<dbReference type="PANTHER" id="PTHR42770:SF11">
    <property type="entry name" value="INNER MEMBRANE TRANSPORT PROTEIN YBAT"/>
    <property type="match status" value="1"/>
</dbReference>
<dbReference type="Pfam" id="PF13520">
    <property type="entry name" value="AA_permease_2"/>
    <property type="match status" value="1"/>
</dbReference>
<dbReference type="PIRSF" id="PIRSF006060">
    <property type="entry name" value="AA_transporter"/>
    <property type="match status" value="1"/>
</dbReference>
<dbReference type="PRINTS" id="PR00175">
    <property type="entry name" value="NAALASMPORT"/>
</dbReference>
<feature type="chain" id="PRO_0000054254" description="Putative amino-acid transporter MJ1196">
    <location>
        <begin position="1"/>
        <end position="366"/>
    </location>
</feature>
<feature type="transmembrane region" description="Helical" evidence="1">
    <location>
        <begin position="14"/>
        <end position="34"/>
    </location>
</feature>
<feature type="transmembrane region" description="Helical" evidence="1">
    <location>
        <begin position="37"/>
        <end position="57"/>
    </location>
</feature>
<feature type="transmembrane region" description="Helical" evidence="1">
    <location>
        <begin position="87"/>
        <end position="107"/>
    </location>
</feature>
<feature type="transmembrane region" description="Helical" evidence="1">
    <location>
        <begin position="111"/>
        <end position="131"/>
    </location>
</feature>
<feature type="transmembrane region" description="Helical" evidence="1">
    <location>
        <begin position="141"/>
        <end position="161"/>
    </location>
</feature>
<feature type="transmembrane region" description="Helical" evidence="1">
    <location>
        <begin position="173"/>
        <end position="193"/>
    </location>
</feature>
<feature type="transmembrane region" description="Helical" evidence="1">
    <location>
        <begin position="205"/>
        <end position="225"/>
    </location>
</feature>
<feature type="transmembrane region" description="Helical" evidence="1">
    <location>
        <begin position="247"/>
        <end position="267"/>
    </location>
</feature>
<feature type="transmembrane region" description="Helical" evidence="1">
    <location>
        <begin position="291"/>
        <end position="311"/>
    </location>
</feature>
<feature type="transmembrane region" description="Helical" evidence="1">
    <location>
        <begin position="314"/>
        <end position="334"/>
    </location>
</feature>
<feature type="transmembrane region" description="Helical" evidence="1">
    <location>
        <begin position="346"/>
        <end position="366"/>
    </location>
</feature>
<sequence length="366" mass="40470">MGHLTLKDAVFLTITSIVGGGIFVLSPLTYLLFGKSIIWGWALLIFVSLIMASPFAYASTKISESGGVYKFVMKILGREIGVFSAYILWLSGVFALSGVVSFFEIVFNTKFNVSYVGLCLIVILTALILGGLRIVGNFVRIFGILTITIILYIVFSNGIKIDSIGEFNLKNAILTIYFGLWTATGWEGITMPLSAFKNQKAIAYGLLVGTFIIGVLYLLFSLTIVSLNVKTNNLDEILKILIGDNLFLLAGMLLIISSCAFSVLFTLSYMPYGMGKDRIFPKAFIKLRKEIPYYGVILNTLLVIILLIFDAKTLVDMSMFSTLIAYFLLYLAVFKESSGKIKAISLISMLITGLLILFRVYNFIIL</sequence>
<proteinExistence type="inferred from homology"/>
<organism>
    <name type="scientific">Methanocaldococcus jannaschii (strain ATCC 43067 / DSM 2661 / JAL-1 / JCM 10045 / NBRC 100440)</name>
    <name type="common">Methanococcus jannaschii</name>
    <dbReference type="NCBI Taxonomy" id="243232"/>
    <lineage>
        <taxon>Archaea</taxon>
        <taxon>Methanobacteriati</taxon>
        <taxon>Methanobacteriota</taxon>
        <taxon>Methanomada group</taxon>
        <taxon>Methanococci</taxon>
        <taxon>Methanococcales</taxon>
        <taxon>Methanocaldococcaceae</taxon>
        <taxon>Methanocaldococcus</taxon>
    </lineage>
</organism>
<evidence type="ECO:0000255" key="1"/>
<evidence type="ECO:0000305" key="2"/>
<name>Y1196_METJA</name>
<comment type="subcellular location">
    <subcellularLocation>
        <location evidence="2">Cell membrane</location>
        <topology evidence="2">Multi-pass membrane protein</topology>
    </subcellularLocation>
</comment>
<comment type="similarity">
    <text evidence="2">Belongs to the amino acid-polyamine-organocation (APC) superfamily.</text>
</comment>
<accession>Q58596</accession>
<protein>
    <recommendedName>
        <fullName>Putative amino-acid transporter MJ1196</fullName>
    </recommendedName>
</protein>